<feature type="chain" id="PRO_1000084232" description="3-isopropylmalate dehydratase large subunit">
    <location>
        <begin position="1"/>
        <end position="456"/>
    </location>
</feature>
<feature type="binding site" evidence="1">
    <location>
        <position position="336"/>
    </location>
    <ligand>
        <name>[4Fe-4S] cluster</name>
        <dbReference type="ChEBI" id="CHEBI:49883"/>
    </ligand>
</feature>
<feature type="binding site" evidence="1">
    <location>
        <position position="396"/>
    </location>
    <ligand>
        <name>[4Fe-4S] cluster</name>
        <dbReference type="ChEBI" id="CHEBI:49883"/>
    </ligand>
</feature>
<feature type="binding site" evidence="1">
    <location>
        <position position="399"/>
    </location>
    <ligand>
        <name>[4Fe-4S] cluster</name>
        <dbReference type="ChEBI" id="CHEBI:49883"/>
    </ligand>
</feature>
<evidence type="ECO:0000255" key="1">
    <source>
        <dbReference type="HAMAP-Rule" id="MF_01026"/>
    </source>
</evidence>
<proteinExistence type="inferred from homology"/>
<dbReference type="EC" id="4.2.1.33" evidence="1"/>
<dbReference type="EMBL" id="CP000730">
    <property type="protein sequence ID" value="ABX30051.1"/>
    <property type="molecule type" value="Genomic_DNA"/>
</dbReference>
<dbReference type="RefSeq" id="WP_000531823.1">
    <property type="nucleotide sequence ID" value="NC_010079.1"/>
</dbReference>
<dbReference type="SMR" id="A8Z4W2"/>
<dbReference type="KEGG" id="sax:USA300HOU_2054"/>
<dbReference type="HOGENOM" id="CLU_006714_3_4_9"/>
<dbReference type="UniPathway" id="UPA00048">
    <property type="reaction ID" value="UER00071"/>
</dbReference>
<dbReference type="GO" id="GO:0003861">
    <property type="term" value="F:3-isopropylmalate dehydratase activity"/>
    <property type="evidence" value="ECO:0007669"/>
    <property type="project" value="UniProtKB-UniRule"/>
</dbReference>
<dbReference type="GO" id="GO:0051539">
    <property type="term" value="F:4 iron, 4 sulfur cluster binding"/>
    <property type="evidence" value="ECO:0007669"/>
    <property type="project" value="UniProtKB-KW"/>
</dbReference>
<dbReference type="GO" id="GO:0046872">
    <property type="term" value="F:metal ion binding"/>
    <property type="evidence" value="ECO:0007669"/>
    <property type="project" value="UniProtKB-KW"/>
</dbReference>
<dbReference type="GO" id="GO:0009098">
    <property type="term" value="P:L-leucine biosynthetic process"/>
    <property type="evidence" value="ECO:0007669"/>
    <property type="project" value="UniProtKB-UniRule"/>
</dbReference>
<dbReference type="CDD" id="cd01583">
    <property type="entry name" value="IPMI"/>
    <property type="match status" value="1"/>
</dbReference>
<dbReference type="Gene3D" id="3.30.499.10">
    <property type="entry name" value="Aconitase, domain 3"/>
    <property type="match status" value="2"/>
</dbReference>
<dbReference type="HAMAP" id="MF_01026">
    <property type="entry name" value="LeuC_type1"/>
    <property type="match status" value="1"/>
</dbReference>
<dbReference type="InterPro" id="IPR004430">
    <property type="entry name" value="3-IsopropMal_deHydase_lsu"/>
</dbReference>
<dbReference type="InterPro" id="IPR015931">
    <property type="entry name" value="Acnase/IPM_dHydase_lsu_aba_1/3"/>
</dbReference>
<dbReference type="InterPro" id="IPR001030">
    <property type="entry name" value="Acoase/IPM_deHydtase_lsu_aba"/>
</dbReference>
<dbReference type="InterPro" id="IPR018136">
    <property type="entry name" value="Aconitase_4Fe-4S_BS"/>
</dbReference>
<dbReference type="InterPro" id="IPR036008">
    <property type="entry name" value="Aconitase_4Fe-4S_dom"/>
</dbReference>
<dbReference type="InterPro" id="IPR050067">
    <property type="entry name" value="IPM_dehydratase_rel_enz"/>
</dbReference>
<dbReference type="InterPro" id="IPR033941">
    <property type="entry name" value="IPMI_cat"/>
</dbReference>
<dbReference type="NCBIfam" id="TIGR00170">
    <property type="entry name" value="leuC"/>
    <property type="match status" value="1"/>
</dbReference>
<dbReference type="NCBIfam" id="NF004016">
    <property type="entry name" value="PRK05478.1"/>
    <property type="match status" value="1"/>
</dbReference>
<dbReference type="NCBIfam" id="NF009116">
    <property type="entry name" value="PRK12466.1"/>
    <property type="match status" value="1"/>
</dbReference>
<dbReference type="PANTHER" id="PTHR43822:SF9">
    <property type="entry name" value="3-ISOPROPYLMALATE DEHYDRATASE"/>
    <property type="match status" value="1"/>
</dbReference>
<dbReference type="PANTHER" id="PTHR43822">
    <property type="entry name" value="HOMOACONITASE, MITOCHONDRIAL-RELATED"/>
    <property type="match status" value="1"/>
</dbReference>
<dbReference type="Pfam" id="PF00330">
    <property type="entry name" value="Aconitase"/>
    <property type="match status" value="1"/>
</dbReference>
<dbReference type="PRINTS" id="PR00415">
    <property type="entry name" value="ACONITASE"/>
</dbReference>
<dbReference type="SUPFAM" id="SSF53732">
    <property type="entry name" value="Aconitase iron-sulfur domain"/>
    <property type="match status" value="1"/>
</dbReference>
<dbReference type="PROSITE" id="PS00450">
    <property type="entry name" value="ACONITASE_1"/>
    <property type="match status" value="1"/>
</dbReference>
<dbReference type="PROSITE" id="PS01244">
    <property type="entry name" value="ACONITASE_2"/>
    <property type="match status" value="1"/>
</dbReference>
<sequence length="456" mass="50326">MGQTLFDKVWNRHVLYGKLGEPQLLYIDLHLIHEVTSPQAFEGLRLQNRKLRRPDLTFATLDHNVPTIDIFNIKDEIANKQITTLQKNAIDFGVHIFDMGSDEQGIVHMVGPETGLTQPGKTIVCGDSHTATHGAFGAIAFGIGTSEVEHVFATQTLWQTKPKNLKIDINGTLPTGVYAKDIILHLIKTYGVDFGTGYALEFTGETIKNLSMDGRMTICNMAIEGGAKYGIIQPDDITFEYVKGRPFADNFAKSVDKWRELYSDDDAIFDRVIELDVSTLEPQVTWGTNPEMGVNFSEPFPEINDINDQRAYDYMGLEPGQKAEDIDLGYVFLGSCTNARLSDLIEASHIVKGNKVHPNITAIVVPGSRTVKKEAEKLGLDTIFKNAGFEWREPGCSMCLGMNPDQVPEGVHCASTSNRNFEGRQGKGARTHLVSPAMAAAAAIHGKFVDVRKVVV</sequence>
<comment type="function">
    <text evidence="1">Catalyzes the isomerization between 2-isopropylmalate and 3-isopropylmalate, via the formation of 2-isopropylmaleate.</text>
</comment>
<comment type="catalytic activity">
    <reaction evidence="1">
        <text>(2R,3S)-3-isopropylmalate = (2S)-2-isopropylmalate</text>
        <dbReference type="Rhea" id="RHEA:32287"/>
        <dbReference type="ChEBI" id="CHEBI:1178"/>
        <dbReference type="ChEBI" id="CHEBI:35121"/>
        <dbReference type="EC" id="4.2.1.33"/>
    </reaction>
</comment>
<comment type="cofactor">
    <cofactor evidence="1">
        <name>[4Fe-4S] cluster</name>
        <dbReference type="ChEBI" id="CHEBI:49883"/>
    </cofactor>
    <text evidence="1">Binds 1 [4Fe-4S] cluster per subunit.</text>
</comment>
<comment type="pathway">
    <text evidence="1">Amino-acid biosynthesis; L-leucine biosynthesis; L-leucine from 3-methyl-2-oxobutanoate: step 2/4.</text>
</comment>
<comment type="subunit">
    <text evidence="1">Heterodimer of LeuC and LeuD.</text>
</comment>
<comment type="similarity">
    <text evidence="1">Belongs to the aconitase/IPM isomerase family. LeuC type 1 subfamily.</text>
</comment>
<protein>
    <recommendedName>
        <fullName evidence="1">3-isopropylmalate dehydratase large subunit</fullName>
        <ecNumber evidence="1">4.2.1.33</ecNumber>
    </recommendedName>
    <alternativeName>
        <fullName evidence="1">Alpha-IPM isomerase</fullName>
        <shortName evidence="1">IPMI</shortName>
    </alternativeName>
    <alternativeName>
        <fullName evidence="1">Isopropylmalate isomerase</fullName>
    </alternativeName>
</protein>
<keyword id="KW-0004">4Fe-4S</keyword>
<keyword id="KW-0028">Amino-acid biosynthesis</keyword>
<keyword id="KW-0100">Branched-chain amino acid biosynthesis</keyword>
<keyword id="KW-0408">Iron</keyword>
<keyword id="KW-0411">Iron-sulfur</keyword>
<keyword id="KW-0432">Leucine biosynthesis</keyword>
<keyword id="KW-0456">Lyase</keyword>
<keyword id="KW-0479">Metal-binding</keyword>
<name>LEUC_STAAT</name>
<gene>
    <name evidence="1" type="primary">leuC</name>
    <name type="ordered locus">USA300HOU_2054</name>
</gene>
<reference key="1">
    <citation type="journal article" date="2007" name="BMC Microbiol.">
        <title>Subtle genetic changes enhance virulence of methicillin resistant and sensitive Staphylococcus aureus.</title>
        <authorList>
            <person name="Highlander S.K."/>
            <person name="Hulten K.G."/>
            <person name="Qin X."/>
            <person name="Jiang H."/>
            <person name="Yerrapragada S."/>
            <person name="Mason E.O. Jr."/>
            <person name="Shang Y."/>
            <person name="Williams T.M."/>
            <person name="Fortunov R.M."/>
            <person name="Liu Y."/>
            <person name="Igboeli O."/>
            <person name="Petrosino J."/>
            <person name="Tirumalai M."/>
            <person name="Uzman A."/>
            <person name="Fox G.E."/>
            <person name="Cardenas A.M."/>
            <person name="Muzny D.M."/>
            <person name="Hemphill L."/>
            <person name="Ding Y."/>
            <person name="Dugan S."/>
            <person name="Blyth P.R."/>
            <person name="Buhay C.J."/>
            <person name="Dinh H.H."/>
            <person name="Hawes A.C."/>
            <person name="Holder M."/>
            <person name="Kovar C.L."/>
            <person name="Lee S.L."/>
            <person name="Liu W."/>
            <person name="Nazareth L.V."/>
            <person name="Wang Q."/>
            <person name="Zhou J."/>
            <person name="Kaplan S.L."/>
            <person name="Weinstock G.M."/>
        </authorList>
    </citation>
    <scope>NUCLEOTIDE SEQUENCE [LARGE SCALE GENOMIC DNA]</scope>
    <source>
        <strain>USA300 / TCH1516</strain>
    </source>
</reference>
<accession>A8Z4W2</accession>
<organism>
    <name type="scientific">Staphylococcus aureus (strain USA300 / TCH1516)</name>
    <dbReference type="NCBI Taxonomy" id="451516"/>
    <lineage>
        <taxon>Bacteria</taxon>
        <taxon>Bacillati</taxon>
        <taxon>Bacillota</taxon>
        <taxon>Bacilli</taxon>
        <taxon>Bacillales</taxon>
        <taxon>Staphylococcaceae</taxon>
        <taxon>Staphylococcus</taxon>
    </lineage>
</organism>